<proteinExistence type="inferred from homology"/>
<comment type="function">
    <text evidence="1">Required for translation of the mitochondrial OLI1 transcript coding for the mitochondrial ATP synthase subunit 9.</text>
</comment>
<comment type="subunit">
    <text evidence="1">Binds to the 5'UTR of the OLI1 mRNA.</text>
</comment>
<comment type="subcellular location">
    <subcellularLocation>
        <location evidence="1">Mitochondrion</location>
    </subcellularLocation>
</comment>
<comment type="similarity">
    <text evidence="3">Belongs to the AEP2 family.</text>
</comment>
<organism>
    <name type="scientific">Saccharomyces cerevisiae (strain YJM789)</name>
    <name type="common">Baker's yeast</name>
    <dbReference type="NCBI Taxonomy" id="307796"/>
    <lineage>
        <taxon>Eukaryota</taxon>
        <taxon>Fungi</taxon>
        <taxon>Dikarya</taxon>
        <taxon>Ascomycota</taxon>
        <taxon>Saccharomycotina</taxon>
        <taxon>Saccharomycetes</taxon>
        <taxon>Saccharomycetales</taxon>
        <taxon>Saccharomycetaceae</taxon>
        <taxon>Saccharomyces</taxon>
    </lineage>
</organism>
<dbReference type="EMBL" id="AAFW02000021">
    <property type="protein sequence ID" value="EDN64222.1"/>
    <property type="molecule type" value="Genomic_DNA"/>
</dbReference>
<dbReference type="HOGENOM" id="CLU_035070_0_0_1"/>
<dbReference type="OrthoDB" id="34352at4893"/>
<dbReference type="Proteomes" id="UP000007060">
    <property type="component" value="Unassembled WGS sequence"/>
</dbReference>
<dbReference type="GO" id="GO:0005739">
    <property type="term" value="C:mitochondrion"/>
    <property type="evidence" value="ECO:0007669"/>
    <property type="project" value="UniProtKB-SubCell"/>
</dbReference>
<dbReference type="GO" id="GO:0003723">
    <property type="term" value="F:RNA binding"/>
    <property type="evidence" value="ECO:0007669"/>
    <property type="project" value="UniProtKB-KW"/>
</dbReference>
<dbReference type="GO" id="GO:0006417">
    <property type="term" value="P:regulation of translation"/>
    <property type="evidence" value="ECO:0007669"/>
    <property type="project" value="UniProtKB-KW"/>
</dbReference>
<dbReference type="InterPro" id="IPR024319">
    <property type="entry name" value="ATPase_expression_mit"/>
</dbReference>
<dbReference type="Pfam" id="PF12921">
    <property type="entry name" value="ATP13"/>
    <property type="match status" value="1"/>
</dbReference>
<sequence>MWINRLVKHPSYSVLRFYTKRLCTVSVKSLREFGVLPNSTICHSVYPRRTYVMGRAVINDILIKKSYSTHTVCAIDRSKDENNGSAYDKFEAKGIPIDVHTLKRIISSSGMDESEFSKSISYLFAKTVDPEPKDVLSLEDLSFLLNKLYTQRFQIRRICRDINAKYSEFWFKLFSLYAEKVDAKRNQVNLRNTKLDACEIFDANLMIKNFIELGQLGKAQKILSFILDRNPDILLSPKNADISTIVHFLQLRCGALAPYWKIPDNSEQKQGFLRKMVRLGAKNTSIRLSSTYKAMDHQTLLKIADLALQEKRLLNSEDLLSTLIQSFGHLGQTQILERCIEHIWQISPQEFPSHVVIKHRGCYPSSKILVSILVSFYFNDHDLHRGLSILDSFIKHYPDVKLDALFWRRLFQLSHFAWTPANDKKATSVVRCWHLMKQWYASKRLRPSVDYETLRQLYDIMKKTGNFPLGIDVLRSFKPGIERMRAENAGKVNNIIIKYQKCIIKELVNRGRFSAVREFIDNYGFDRKMTKDLNIFCANRMFLRSKKMKNKIENKKEREKVRLDSFDDDEDDGMIIGSLW</sequence>
<keyword id="KW-0496">Mitochondrion</keyword>
<keyword id="KW-0694">RNA-binding</keyword>
<keyword id="KW-0809">Transit peptide</keyword>
<keyword id="KW-0810">Translation regulation</keyword>
<reference key="1">
    <citation type="journal article" date="2007" name="Proc. Natl. Acad. Sci. U.S.A.">
        <title>Genome sequencing and comparative analysis of Saccharomyces cerevisiae strain YJM789.</title>
        <authorList>
            <person name="Wei W."/>
            <person name="McCusker J.H."/>
            <person name="Hyman R.W."/>
            <person name="Jones T."/>
            <person name="Ning Y."/>
            <person name="Cao Z."/>
            <person name="Gu Z."/>
            <person name="Bruno D."/>
            <person name="Miranda M."/>
            <person name="Nguyen M."/>
            <person name="Wilhelmy J."/>
            <person name="Komp C."/>
            <person name="Tamse R."/>
            <person name="Wang X."/>
            <person name="Jia P."/>
            <person name="Luedi P."/>
            <person name="Oefner P.J."/>
            <person name="David L."/>
            <person name="Dietrich F.S."/>
            <person name="Li Y."/>
            <person name="Davis R.W."/>
            <person name="Steinmetz L.M."/>
        </authorList>
    </citation>
    <scope>NUCLEOTIDE SEQUENCE [LARGE SCALE GENOMIC DNA]</scope>
    <source>
        <strain>YJM789</strain>
    </source>
</reference>
<feature type="transit peptide" description="Mitochondrion" evidence="2">
    <location>
        <begin position="1"/>
        <end position="40"/>
    </location>
</feature>
<feature type="chain" id="PRO_0000405637" description="ATPase expression protein 2, mitochondrial">
    <location>
        <begin position="41"/>
        <end position="580"/>
    </location>
</feature>
<gene>
    <name type="primary">AEP2</name>
    <name type="synonym">ATP13</name>
    <name type="ORF">SCY_4464</name>
</gene>
<accession>A6ZMZ8</accession>
<name>AEP2_YEAS7</name>
<evidence type="ECO:0000250" key="1"/>
<evidence type="ECO:0000255" key="2"/>
<evidence type="ECO:0000305" key="3"/>
<protein>
    <recommendedName>
        <fullName>ATPase expression protein 2, mitochondrial</fullName>
    </recommendedName>
</protein>